<sequence length="250" mass="28556">MKNINADDTYRIINKIKACRSNNDINQCLSDMTKMVHCEYYLLAIIYPHSMVKSDISILDNYPKKWRQYYDDANLIKYDPIVDYSNSNHSPINWNIFENNAVNKKSPNVIKEAKTSGLITGFSFPIHTANNGFGMLSFAHSEKDNYIDSLFLHACMNIPLIVPSLVDNYRKINIANNKSNNDLTKREKECLAWACEGKSSWDISKILGCSERTVTFHLTNAQMKLNTTNRCQSISKAILTGAIDCPYFKN</sequence>
<protein>
    <recommendedName>
        <fullName>Transcriptional activator protein LuxR</fullName>
    </recommendedName>
</protein>
<dbReference type="EMBL" id="M25751">
    <property type="protein sequence ID" value="AAA27540.1"/>
    <property type="molecule type" value="Genomic_DNA"/>
</dbReference>
<dbReference type="EMBL" id="M19039">
    <property type="protein sequence ID" value="AAA27551.1"/>
    <property type="molecule type" value="Genomic_DNA"/>
</dbReference>
<dbReference type="EMBL" id="M25752">
    <property type="protein sequence ID" value="AAA27541.1"/>
    <property type="molecule type" value="Genomic_DNA"/>
</dbReference>
<dbReference type="EMBL" id="AF170104">
    <property type="protein sequence ID" value="AAD48473.1"/>
    <property type="molecule type" value="Genomic_DNA"/>
</dbReference>
<dbReference type="EMBL" id="Y00509">
    <property type="protein sequence ID" value="CAA68561.1"/>
    <property type="molecule type" value="Genomic_DNA"/>
</dbReference>
<dbReference type="PIR" id="B33538">
    <property type="entry name" value="B33538"/>
</dbReference>
<dbReference type="PIR" id="S06314">
    <property type="entry name" value="S06314"/>
</dbReference>
<dbReference type="SMR" id="P12746"/>
<dbReference type="IntAct" id="P12746">
    <property type="interactions" value="1"/>
</dbReference>
<dbReference type="BindingDB" id="P12746"/>
<dbReference type="ChEMBL" id="CHEMBL5351"/>
<dbReference type="DrugCentral" id="P12746"/>
<dbReference type="GO" id="GO:0003677">
    <property type="term" value="F:DNA binding"/>
    <property type="evidence" value="ECO:0007669"/>
    <property type="project" value="UniProtKB-KW"/>
</dbReference>
<dbReference type="GO" id="GO:0008218">
    <property type="term" value="P:bioluminescence"/>
    <property type="evidence" value="ECO:0007669"/>
    <property type="project" value="UniProtKB-KW"/>
</dbReference>
<dbReference type="GO" id="GO:1905087">
    <property type="term" value="P:positive regulation of bioluminescence"/>
    <property type="evidence" value="ECO:0000315"/>
    <property type="project" value="CACAO"/>
</dbReference>
<dbReference type="GO" id="GO:0045893">
    <property type="term" value="P:positive regulation of DNA-templated transcription"/>
    <property type="evidence" value="ECO:0000314"/>
    <property type="project" value="CACAO"/>
</dbReference>
<dbReference type="GO" id="GO:0009372">
    <property type="term" value="P:quorum sensing"/>
    <property type="evidence" value="ECO:0007669"/>
    <property type="project" value="UniProtKB-KW"/>
</dbReference>
<dbReference type="GO" id="GO:0052008">
    <property type="term" value="P:symbiont-mediated disruption of host cellular anatomical structure"/>
    <property type="evidence" value="ECO:0000315"/>
    <property type="project" value="CACAO"/>
</dbReference>
<dbReference type="CDD" id="cd06170">
    <property type="entry name" value="LuxR_C_like"/>
    <property type="match status" value="1"/>
</dbReference>
<dbReference type="FunFam" id="3.30.450.80:FF:000010">
    <property type="entry name" value="Transcriptional activator protein LuxR"/>
    <property type="match status" value="1"/>
</dbReference>
<dbReference type="Gene3D" id="3.30.450.80">
    <property type="entry name" value="Transcription factor LuxR-like, autoinducer-binding domain"/>
    <property type="match status" value="1"/>
</dbReference>
<dbReference type="Gene3D" id="1.10.10.10">
    <property type="entry name" value="Winged helix-like DNA-binding domain superfamily/Winged helix DNA-binding domain"/>
    <property type="match status" value="1"/>
</dbReference>
<dbReference type="InterPro" id="IPR016032">
    <property type="entry name" value="Sig_transdc_resp-reg_C-effctor"/>
</dbReference>
<dbReference type="InterPro" id="IPR005143">
    <property type="entry name" value="TF_LuxR_autoind-bd_dom"/>
</dbReference>
<dbReference type="InterPro" id="IPR036693">
    <property type="entry name" value="TF_LuxR_autoind-bd_dom_sf"/>
</dbReference>
<dbReference type="InterPro" id="IPR000792">
    <property type="entry name" value="Tscrpt_reg_LuxR_C"/>
</dbReference>
<dbReference type="InterPro" id="IPR036388">
    <property type="entry name" value="WH-like_DNA-bd_sf"/>
</dbReference>
<dbReference type="PANTHER" id="PTHR44688">
    <property type="entry name" value="DNA-BINDING TRANSCRIPTIONAL ACTIVATOR DEVR_DOSR"/>
    <property type="match status" value="1"/>
</dbReference>
<dbReference type="PANTHER" id="PTHR44688:SF16">
    <property type="entry name" value="DNA-BINDING TRANSCRIPTIONAL ACTIVATOR DEVR_DOSR"/>
    <property type="match status" value="1"/>
</dbReference>
<dbReference type="Pfam" id="PF03472">
    <property type="entry name" value="Autoind_bind"/>
    <property type="match status" value="1"/>
</dbReference>
<dbReference type="Pfam" id="PF00196">
    <property type="entry name" value="GerE"/>
    <property type="match status" value="1"/>
</dbReference>
<dbReference type="PRINTS" id="PR00038">
    <property type="entry name" value="HTHLUXR"/>
</dbReference>
<dbReference type="SMART" id="SM00421">
    <property type="entry name" value="HTH_LUXR"/>
    <property type="match status" value="1"/>
</dbReference>
<dbReference type="SUPFAM" id="SSF46894">
    <property type="entry name" value="C-terminal effector domain of the bipartite response regulators"/>
    <property type="match status" value="1"/>
</dbReference>
<dbReference type="SUPFAM" id="SSF75516">
    <property type="entry name" value="Pheromone-binding domain of LuxR-like quorum-sensing transcription factors"/>
    <property type="match status" value="1"/>
</dbReference>
<dbReference type="PROSITE" id="PS00622">
    <property type="entry name" value="HTH_LUXR_1"/>
    <property type="match status" value="1"/>
</dbReference>
<dbReference type="PROSITE" id="PS50043">
    <property type="entry name" value="HTH_LUXR_2"/>
    <property type="match status" value="1"/>
</dbReference>
<proteinExistence type="evidence at protein level"/>
<comment type="function">
    <text>Transcriptional activator of the bioluminescence operon. Binds to the OHHL autoinducer.</text>
</comment>
<comment type="similarity">
    <text evidence="2">Belongs to the autoinducer-regulated transcriptional regulatory protein family.</text>
</comment>
<keyword id="KW-0010">Activator</keyword>
<keyword id="KW-0903">Direct protein sequencing</keyword>
<keyword id="KW-0238">DNA-binding</keyword>
<keyword id="KW-0455">Luminescence</keyword>
<keyword id="KW-0673">Quorum sensing</keyword>
<keyword id="KW-0804">Transcription</keyword>
<keyword id="KW-0805">Transcription regulation</keyword>
<evidence type="ECO:0000255" key="1">
    <source>
        <dbReference type="PROSITE-ProRule" id="PRU00411"/>
    </source>
</evidence>
<evidence type="ECO:0000305" key="2"/>
<name>LUXR_ALIFS</name>
<accession>P12746</accession>
<reference key="1">
    <citation type="journal article" date="1988" name="Biochemistry">
        <title>Nucleotide sequence of the luxR and luxI genes and structure of the primary regulatory region of the lux regulon of Vibrio fischeri ATCC 7744.</title>
        <authorList>
            <person name="Devine J.H."/>
            <person name="Countryman C."/>
            <person name="Baldwin T.O."/>
        </authorList>
    </citation>
    <scope>NUCLEOTIDE SEQUENCE [GENOMIC DNA]</scope>
    <source>
        <strain>ATCC 7744 / DSM 507 / NCIMB 1281 / 398</strain>
    </source>
</reference>
<reference key="2">
    <citation type="journal article" date="1989" name="Proc. Natl. Acad. Sci. U.S.A.">
        <title>Identification of the operator of the lux regulon from the Vibrio fischeri strain ATCC7744.</title>
        <authorList>
            <person name="Devine J.H."/>
            <person name="Shadel G.S."/>
            <person name="Baldwin T.O."/>
        </authorList>
    </citation>
    <scope>NUCLEOTIDE SEQUENCE [GENOMIC DNA]</scope>
    <scope>SEQUENCE REVISION</scope>
    <source>
        <strain>ATCC 7744 / DSM 507 / NCIMB 1281 / 398</strain>
    </source>
</reference>
<reference key="3">
    <citation type="journal article" date="1987" name="Nucleic Acids Res.">
        <title>Nucleotide sequence of the regulatory locus controlling expression of bacterial genes for bioluminescence.</title>
        <authorList>
            <person name="Engebrecht J."/>
            <person name="Silverman M."/>
        </authorList>
    </citation>
    <scope>NUCLEOTIDE SEQUENCE [GENOMIC DNA]</scope>
    <source>
        <strain>MJ-1</strain>
    </source>
</reference>
<reference key="4">
    <citation type="submission" date="1999-07" db="EMBL/GenBank/DDBJ databases">
        <title>Vibrio fischeri Lux operon SalI digest.</title>
        <authorList>
            <person name="Knight T."/>
            <person name="Papadakis N."/>
        </authorList>
    </citation>
    <scope>NUCLEOTIDE SEQUENCE [GENOMIC DNA]</scope>
    <source>
        <strain>MJ-1</strain>
    </source>
</reference>
<reference key="5">
    <citation type="journal article" date="1987" name="Proc. Natl. Acad. Sci. U.S.A.">
        <title>Overproduction and purification of the luxR gene product: transcriptional activator of the Vibrio fischeri luminescence system.</title>
        <authorList>
            <person name="Kaplan H.B."/>
            <person name="Greenberg E.P."/>
        </authorList>
    </citation>
    <scope>PROTEIN SEQUENCE OF 1-15</scope>
    <scope>DNA-BINDING</scope>
</reference>
<gene>
    <name type="primary">luxR</name>
</gene>
<organism>
    <name type="scientific">Aliivibrio fischeri</name>
    <name type="common">Vibrio fischeri</name>
    <dbReference type="NCBI Taxonomy" id="668"/>
    <lineage>
        <taxon>Bacteria</taxon>
        <taxon>Pseudomonadati</taxon>
        <taxon>Pseudomonadota</taxon>
        <taxon>Gammaproteobacteria</taxon>
        <taxon>Vibrionales</taxon>
        <taxon>Vibrionaceae</taxon>
        <taxon>Aliivibrio</taxon>
    </lineage>
</organism>
<feature type="chain" id="PRO_0000184161" description="Transcriptional activator protein LuxR">
    <location>
        <begin position="1"/>
        <end position="250"/>
    </location>
</feature>
<feature type="domain" description="HTH luxR-type" evidence="1">
    <location>
        <begin position="176"/>
        <end position="241"/>
    </location>
</feature>
<feature type="DNA-binding region" description="H-T-H motif" evidence="1">
    <location>
        <begin position="200"/>
        <end position="219"/>
    </location>
</feature>
<feature type="sequence variant" description="In strain: ATCC 7744.">
    <original>N</original>
    <variation>D</variation>
    <location>
        <position position="3"/>
    </location>
</feature>
<feature type="sequence variant" description="In strain: ATCC 7744.">
    <original>T</original>
    <variation>S</variation>
    <location>
        <position position="115"/>
    </location>
</feature>
<feature type="sequence variant" description="In strain: ATCC 7744.">
    <original>E</original>
    <variation>K</variation>
    <location>
        <position position="211"/>
    </location>
</feature>
<feature type="sequence variant" description="In strain: ATCC 7744.">
    <original>N</original>
    <variation>S</variation>
    <location>
        <position position="250"/>
    </location>
</feature>
<feature type="sequence conflict" description="In Ref. 3; CAA68561." evidence="2" ref="3">
    <original>SNN</original>
    <variation>AY</variation>
    <location>
        <begin position="21"/>
        <end position="23"/>
    </location>
</feature>
<feature type="sequence conflict" description="In Ref. 3; CAA68561." evidence="2" ref="3">
    <original>L</original>
    <variation>LT</variation>
    <location>
        <position position="42"/>
    </location>
</feature>